<dbReference type="EMBL" id="CP001113">
    <property type="protein sequence ID" value="ACF62320.1"/>
    <property type="molecule type" value="Genomic_DNA"/>
</dbReference>
<dbReference type="RefSeq" id="WP_000613954.1">
    <property type="nucleotide sequence ID" value="NZ_CCMR01000003.1"/>
</dbReference>
<dbReference type="SMR" id="B4SUT0"/>
<dbReference type="GeneID" id="98390432"/>
<dbReference type="KEGG" id="see:SNSL254_A3699"/>
<dbReference type="HOGENOM" id="CLU_095071_2_1_6"/>
<dbReference type="Proteomes" id="UP000008824">
    <property type="component" value="Chromosome"/>
</dbReference>
<dbReference type="GO" id="GO:0022625">
    <property type="term" value="C:cytosolic large ribosomal subunit"/>
    <property type="evidence" value="ECO:0007669"/>
    <property type="project" value="TreeGrafter"/>
</dbReference>
<dbReference type="GO" id="GO:0070180">
    <property type="term" value="F:large ribosomal subunit rRNA binding"/>
    <property type="evidence" value="ECO:0007669"/>
    <property type="project" value="TreeGrafter"/>
</dbReference>
<dbReference type="GO" id="GO:0003735">
    <property type="term" value="F:structural constituent of ribosome"/>
    <property type="evidence" value="ECO:0007669"/>
    <property type="project" value="InterPro"/>
</dbReference>
<dbReference type="GO" id="GO:0006412">
    <property type="term" value="P:translation"/>
    <property type="evidence" value="ECO:0007669"/>
    <property type="project" value="UniProtKB-UniRule"/>
</dbReference>
<dbReference type="CDD" id="cd00337">
    <property type="entry name" value="Ribosomal_uL14"/>
    <property type="match status" value="1"/>
</dbReference>
<dbReference type="FunFam" id="2.40.150.20:FF:000001">
    <property type="entry name" value="50S ribosomal protein L14"/>
    <property type="match status" value="1"/>
</dbReference>
<dbReference type="Gene3D" id="2.40.150.20">
    <property type="entry name" value="Ribosomal protein L14"/>
    <property type="match status" value="1"/>
</dbReference>
<dbReference type="HAMAP" id="MF_01367">
    <property type="entry name" value="Ribosomal_uL14"/>
    <property type="match status" value="1"/>
</dbReference>
<dbReference type="InterPro" id="IPR000218">
    <property type="entry name" value="Ribosomal_uL14"/>
</dbReference>
<dbReference type="InterPro" id="IPR005745">
    <property type="entry name" value="Ribosomal_uL14_bac-type"/>
</dbReference>
<dbReference type="InterPro" id="IPR019972">
    <property type="entry name" value="Ribosomal_uL14_CS"/>
</dbReference>
<dbReference type="InterPro" id="IPR036853">
    <property type="entry name" value="Ribosomal_uL14_sf"/>
</dbReference>
<dbReference type="NCBIfam" id="TIGR01067">
    <property type="entry name" value="rplN_bact"/>
    <property type="match status" value="1"/>
</dbReference>
<dbReference type="PANTHER" id="PTHR11761">
    <property type="entry name" value="50S/60S RIBOSOMAL PROTEIN L14/L23"/>
    <property type="match status" value="1"/>
</dbReference>
<dbReference type="PANTHER" id="PTHR11761:SF3">
    <property type="entry name" value="LARGE RIBOSOMAL SUBUNIT PROTEIN UL14M"/>
    <property type="match status" value="1"/>
</dbReference>
<dbReference type="Pfam" id="PF00238">
    <property type="entry name" value="Ribosomal_L14"/>
    <property type="match status" value="1"/>
</dbReference>
<dbReference type="SMART" id="SM01374">
    <property type="entry name" value="Ribosomal_L14"/>
    <property type="match status" value="1"/>
</dbReference>
<dbReference type="SUPFAM" id="SSF50193">
    <property type="entry name" value="Ribosomal protein L14"/>
    <property type="match status" value="1"/>
</dbReference>
<dbReference type="PROSITE" id="PS00049">
    <property type="entry name" value="RIBOSOMAL_L14"/>
    <property type="match status" value="1"/>
</dbReference>
<keyword id="KW-0687">Ribonucleoprotein</keyword>
<keyword id="KW-0689">Ribosomal protein</keyword>
<keyword id="KW-0694">RNA-binding</keyword>
<keyword id="KW-0699">rRNA-binding</keyword>
<evidence type="ECO:0000255" key="1">
    <source>
        <dbReference type="HAMAP-Rule" id="MF_01367"/>
    </source>
</evidence>
<evidence type="ECO:0000305" key="2"/>
<comment type="function">
    <text evidence="1">Binds to 23S rRNA. Forms part of two intersubunit bridges in the 70S ribosome.</text>
</comment>
<comment type="subunit">
    <text evidence="1">Part of the 50S ribosomal subunit. Forms a cluster with proteins L3 and L19. In the 70S ribosome, L14 and L19 interact and together make contacts with the 16S rRNA in bridges B5 and B8.</text>
</comment>
<comment type="similarity">
    <text evidence="1">Belongs to the universal ribosomal protein uL14 family.</text>
</comment>
<reference key="1">
    <citation type="journal article" date="2011" name="J. Bacteriol.">
        <title>Comparative genomics of 28 Salmonella enterica isolates: evidence for CRISPR-mediated adaptive sublineage evolution.</title>
        <authorList>
            <person name="Fricke W.F."/>
            <person name="Mammel M.K."/>
            <person name="McDermott P.F."/>
            <person name="Tartera C."/>
            <person name="White D.G."/>
            <person name="Leclerc J.E."/>
            <person name="Ravel J."/>
            <person name="Cebula T.A."/>
        </authorList>
    </citation>
    <scope>NUCLEOTIDE SEQUENCE [LARGE SCALE GENOMIC DNA]</scope>
    <source>
        <strain>SL254</strain>
    </source>
</reference>
<gene>
    <name evidence="1" type="primary">rplN</name>
    <name type="ordered locus">SNSL254_A3699</name>
</gene>
<accession>B4SUT0</accession>
<protein>
    <recommendedName>
        <fullName evidence="1">Large ribosomal subunit protein uL14</fullName>
    </recommendedName>
    <alternativeName>
        <fullName evidence="2">50S ribosomal protein L14</fullName>
    </alternativeName>
</protein>
<sequence>MIQEQTMLNVADNSGARRVMCIKVLGGSHRRYAGVGDIIKITIKEAIPRGKVKKGDVLKAVVVRTKKGVRRPDGSVIRFDGNACVILNNNSEQPIGTRIFGPVTRELRNEKFMKIISLAPEVL</sequence>
<name>RL14_SALNS</name>
<proteinExistence type="inferred from homology"/>
<feature type="chain" id="PRO_1000144326" description="Large ribosomal subunit protein uL14">
    <location>
        <begin position="1"/>
        <end position="123"/>
    </location>
</feature>
<organism>
    <name type="scientific">Salmonella newport (strain SL254)</name>
    <dbReference type="NCBI Taxonomy" id="423368"/>
    <lineage>
        <taxon>Bacteria</taxon>
        <taxon>Pseudomonadati</taxon>
        <taxon>Pseudomonadota</taxon>
        <taxon>Gammaproteobacteria</taxon>
        <taxon>Enterobacterales</taxon>
        <taxon>Enterobacteriaceae</taxon>
        <taxon>Salmonella</taxon>
    </lineage>
</organism>